<accession>A5VHN6</accession>
<keyword id="KW-0028">Amino-acid biosynthesis</keyword>
<keyword id="KW-0055">Arginine biosynthesis</keyword>
<keyword id="KW-0067">ATP-binding</keyword>
<keyword id="KW-0436">Ligase</keyword>
<keyword id="KW-0460">Magnesium</keyword>
<keyword id="KW-0464">Manganese</keyword>
<keyword id="KW-0479">Metal-binding</keyword>
<keyword id="KW-0547">Nucleotide-binding</keyword>
<keyword id="KW-0665">Pyrimidine biosynthesis</keyword>
<keyword id="KW-1185">Reference proteome</keyword>
<keyword id="KW-0677">Repeat</keyword>
<feature type="chain" id="PRO_1000066357" description="Carbamoyl phosphate synthase large chain">
    <location>
        <begin position="1"/>
        <end position="1056"/>
    </location>
</feature>
<feature type="domain" description="ATP-grasp 1" evidence="1">
    <location>
        <begin position="133"/>
        <end position="327"/>
    </location>
</feature>
<feature type="domain" description="ATP-grasp 2" evidence="1">
    <location>
        <begin position="671"/>
        <end position="861"/>
    </location>
</feature>
<feature type="domain" description="MGS-like" evidence="1">
    <location>
        <begin position="930"/>
        <end position="1056"/>
    </location>
</feature>
<feature type="region of interest" description="Carboxyphosphate synthetic domain" evidence="1">
    <location>
        <begin position="1"/>
        <end position="401"/>
    </location>
</feature>
<feature type="region of interest" description="Oligomerization domain" evidence="1">
    <location>
        <begin position="402"/>
        <end position="546"/>
    </location>
</feature>
<feature type="region of interest" description="Carbamoyl phosphate synthetic domain" evidence="1">
    <location>
        <begin position="547"/>
        <end position="929"/>
    </location>
</feature>
<feature type="region of interest" description="Allosteric domain" evidence="1">
    <location>
        <begin position="930"/>
        <end position="1056"/>
    </location>
</feature>
<feature type="binding site" evidence="1">
    <location>
        <position position="129"/>
    </location>
    <ligand>
        <name>ATP</name>
        <dbReference type="ChEBI" id="CHEBI:30616"/>
        <label>1</label>
    </ligand>
</feature>
<feature type="binding site" evidence="1">
    <location>
        <position position="169"/>
    </location>
    <ligand>
        <name>ATP</name>
        <dbReference type="ChEBI" id="CHEBI:30616"/>
        <label>1</label>
    </ligand>
</feature>
<feature type="binding site" evidence="1">
    <location>
        <position position="175"/>
    </location>
    <ligand>
        <name>ATP</name>
        <dbReference type="ChEBI" id="CHEBI:30616"/>
        <label>1</label>
    </ligand>
</feature>
<feature type="binding site" evidence="1">
    <location>
        <position position="176"/>
    </location>
    <ligand>
        <name>ATP</name>
        <dbReference type="ChEBI" id="CHEBI:30616"/>
        <label>1</label>
    </ligand>
</feature>
<feature type="binding site" evidence="1">
    <location>
        <position position="208"/>
    </location>
    <ligand>
        <name>ATP</name>
        <dbReference type="ChEBI" id="CHEBI:30616"/>
        <label>1</label>
    </ligand>
</feature>
<feature type="binding site" evidence="1">
    <location>
        <position position="210"/>
    </location>
    <ligand>
        <name>ATP</name>
        <dbReference type="ChEBI" id="CHEBI:30616"/>
        <label>1</label>
    </ligand>
</feature>
<feature type="binding site" evidence="1">
    <location>
        <position position="215"/>
    </location>
    <ligand>
        <name>ATP</name>
        <dbReference type="ChEBI" id="CHEBI:30616"/>
        <label>1</label>
    </ligand>
</feature>
<feature type="binding site" evidence="1">
    <location>
        <position position="241"/>
    </location>
    <ligand>
        <name>ATP</name>
        <dbReference type="ChEBI" id="CHEBI:30616"/>
        <label>1</label>
    </ligand>
</feature>
<feature type="binding site" evidence="1">
    <location>
        <position position="242"/>
    </location>
    <ligand>
        <name>ATP</name>
        <dbReference type="ChEBI" id="CHEBI:30616"/>
        <label>1</label>
    </ligand>
</feature>
<feature type="binding site" evidence="1">
    <location>
        <position position="243"/>
    </location>
    <ligand>
        <name>ATP</name>
        <dbReference type="ChEBI" id="CHEBI:30616"/>
        <label>1</label>
    </ligand>
</feature>
<feature type="binding site" evidence="1">
    <location>
        <position position="284"/>
    </location>
    <ligand>
        <name>ATP</name>
        <dbReference type="ChEBI" id="CHEBI:30616"/>
        <label>1</label>
    </ligand>
</feature>
<feature type="binding site" evidence="1">
    <location>
        <position position="284"/>
    </location>
    <ligand>
        <name>Mg(2+)</name>
        <dbReference type="ChEBI" id="CHEBI:18420"/>
        <label>1</label>
    </ligand>
</feature>
<feature type="binding site" evidence="1">
    <location>
        <position position="284"/>
    </location>
    <ligand>
        <name>Mn(2+)</name>
        <dbReference type="ChEBI" id="CHEBI:29035"/>
        <label>1</label>
    </ligand>
</feature>
<feature type="binding site" evidence="1">
    <location>
        <position position="298"/>
    </location>
    <ligand>
        <name>ATP</name>
        <dbReference type="ChEBI" id="CHEBI:30616"/>
        <label>1</label>
    </ligand>
</feature>
<feature type="binding site" evidence="1">
    <location>
        <position position="298"/>
    </location>
    <ligand>
        <name>Mg(2+)</name>
        <dbReference type="ChEBI" id="CHEBI:18420"/>
        <label>1</label>
    </ligand>
</feature>
<feature type="binding site" evidence="1">
    <location>
        <position position="298"/>
    </location>
    <ligand>
        <name>Mg(2+)</name>
        <dbReference type="ChEBI" id="CHEBI:18420"/>
        <label>2</label>
    </ligand>
</feature>
<feature type="binding site" evidence="1">
    <location>
        <position position="298"/>
    </location>
    <ligand>
        <name>Mn(2+)</name>
        <dbReference type="ChEBI" id="CHEBI:29035"/>
        <label>1</label>
    </ligand>
</feature>
<feature type="binding site" evidence="1">
    <location>
        <position position="298"/>
    </location>
    <ligand>
        <name>Mn(2+)</name>
        <dbReference type="ChEBI" id="CHEBI:29035"/>
        <label>2</label>
    </ligand>
</feature>
<feature type="binding site" evidence="1">
    <location>
        <position position="300"/>
    </location>
    <ligand>
        <name>Mg(2+)</name>
        <dbReference type="ChEBI" id="CHEBI:18420"/>
        <label>2</label>
    </ligand>
</feature>
<feature type="binding site" evidence="1">
    <location>
        <position position="300"/>
    </location>
    <ligand>
        <name>Mn(2+)</name>
        <dbReference type="ChEBI" id="CHEBI:29035"/>
        <label>2</label>
    </ligand>
</feature>
<feature type="binding site" evidence="1">
    <location>
        <position position="707"/>
    </location>
    <ligand>
        <name>ATP</name>
        <dbReference type="ChEBI" id="CHEBI:30616"/>
        <label>2</label>
    </ligand>
</feature>
<feature type="binding site" evidence="1">
    <location>
        <position position="746"/>
    </location>
    <ligand>
        <name>ATP</name>
        <dbReference type="ChEBI" id="CHEBI:30616"/>
        <label>2</label>
    </ligand>
</feature>
<feature type="binding site" evidence="1">
    <location>
        <position position="748"/>
    </location>
    <ligand>
        <name>ATP</name>
        <dbReference type="ChEBI" id="CHEBI:30616"/>
        <label>2</label>
    </ligand>
</feature>
<feature type="binding site" evidence="1">
    <location>
        <position position="752"/>
    </location>
    <ligand>
        <name>ATP</name>
        <dbReference type="ChEBI" id="CHEBI:30616"/>
        <label>2</label>
    </ligand>
</feature>
<feature type="binding site" evidence="1">
    <location>
        <position position="777"/>
    </location>
    <ligand>
        <name>ATP</name>
        <dbReference type="ChEBI" id="CHEBI:30616"/>
        <label>2</label>
    </ligand>
</feature>
<feature type="binding site" evidence="1">
    <location>
        <position position="778"/>
    </location>
    <ligand>
        <name>ATP</name>
        <dbReference type="ChEBI" id="CHEBI:30616"/>
        <label>2</label>
    </ligand>
</feature>
<feature type="binding site" evidence="1">
    <location>
        <position position="779"/>
    </location>
    <ligand>
        <name>ATP</name>
        <dbReference type="ChEBI" id="CHEBI:30616"/>
        <label>2</label>
    </ligand>
</feature>
<feature type="binding site" evidence="1">
    <location>
        <position position="780"/>
    </location>
    <ligand>
        <name>ATP</name>
        <dbReference type="ChEBI" id="CHEBI:30616"/>
        <label>2</label>
    </ligand>
</feature>
<feature type="binding site" evidence="1">
    <location>
        <position position="820"/>
    </location>
    <ligand>
        <name>ATP</name>
        <dbReference type="ChEBI" id="CHEBI:30616"/>
        <label>2</label>
    </ligand>
</feature>
<feature type="binding site" evidence="1">
    <location>
        <position position="820"/>
    </location>
    <ligand>
        <name>Mg(2+)</name>
        <dbReference type="ChEBI" id="CHEBI:18420"/>
        <label>3</label>
    </ligand>
</feature>
<feature type="binding site" evidence="1">
    <location>
        <position position="820"/>
    </location>
    <ligand>
        <name>Mn(2+)</name>
        <dbReference type="ChEBI" id="CHEBI:29035"/>
        <label>3</label>
    </ligand>
</feature>
<feature type="binding site" evidence="1">
    <location>
        <position position="832"/>
    </location>
    <ligand>
        <name>ATP</name>
        <dbReference type="ChEBI" id="CHEBI:30616"/>
        <label>2</label>
    </ligand>
</feature>
<feature type="binding site" evidence="1">
    <location>
        <position position="832"/>
    </location>
    <ligand>
        <name>Mg(2+)</name>
        <dbReference type="ChEBI" id="CHEBI:18420"/>
        <label>3</label>
    </ligand>
</feature>
<feature type="binding site" evidence="1">
    <location>
        <position position="832"/>
    </location>
    <ligand>
        <name>Mg(2+)</name>
        <dbReference type="ChEBI" id="CHEBI:18420"/>
        <label>4</label>
    </ligand>
</feature>
<feature type="binding site" evidence="1">
    <location>
        <position position="832"/>
    </location>
    <ligand>
        <name>Mn(2+)</name>
        <dbReference type="ChEBI" id="CHEBI:29035"/>
        <label>3</label>
    </ligand>
</feature>
<feature type="binding site" evidence="1">
    <location>
        <position position="832"/>
    </location>
    <ligand>
        <name>Mn(2+)</name>
        <dbReference type="ChEBI" id="CHEBI:29035"/>
        <label>4</label>
    </ligand>
</feature>
<feature type="binding site" evidence="1">
    <location>
        <position position="834"/>
    </location>
    <ligand>
        <name>Mg(2+)</name>
        <dbReference type="ChEBI" id="CHEBI:18420"/>
        <label>4</label>
    </ligand>
</feature>
<feature type="binding site" evidence="1">
    <location>
        <position position="834"/>
    </location>
    <ligand>
        <name>Mn(2+)</name>
        <dbReference type="ChEBI" id="CHEBI:29035"/>
        <label>4</label>
    </ligand>
</feature>
<proteinExistence type="inferred from homology"/>
<organism>
    <name type="scientific">Limosilactobacillus reuteri (strain DSM 20016)</name>
    <name type="common">Lactobacillus reuteri</name>
    <dbReference type="NCBI Taxonomy" id="557436"/>
    <lineage>
        <taxon>Bacteria</taxon>
        <taxon>Bacillati</taxon>
        <taxon>Bacillota</taxon>
        <taxon>Bacilli</taxon>
        <taxon>Lactobacillales</taxon>
        <taxon>Lactobacillaceae</taxon>
        <taxon>Limosilactobacillus</taxon>
    </lineage>
</organism>
<sequence>MPKRTDIHKILVIGSGPIIIGQAAEFDYSGTQACLALREEGYETILVNSNPATIMTDKEIADHVYIEPLTVESLSRIIRQEYPDAILPTLGGQIGLNLAVSLSETGLLDELGIELLGTKLDSIDEAEDREKFKELMNELGEPVPASQTVNTVDEAVEFAHQCGYPVIVRPAFTMGGTGGGICHNDAEMRTVAKNGLELSPVTQCLIEKSIAGYKEIEFEVMRDAADNVMVVCCMENFDPVGIHTGDSIVFAPNQTLSDREYQMLRDCALKLIRALKIEGGCNVQLALDPQSFQYNVIEVNPRVSRSSALASKATGYPIAKMAAKIAVGLTLDEIKNPVTKTTFAEFEPALDYVVCKIPRWPFDKFTQADRHLGSQMKATGEVMAIGRTAEEALHKAVRSLEIDEKDLFSAEAHHAPTDMLEKKLRYPQDDRLFYLAETFRRGYSLQQTHDLTKISPYFLDIVKHLVELEDDLSTKPFDVETLITSKKYGFSDATIARLWHTSSQEVRKFRKQNEVLPVYKMIDTCAAEFASSTPYFYSAYDHENESQRTKKPSILVLGSGPIRIGQGVEFDYATVHSVKAIQRAGYEAIVINSNPETVSTDFSVSDKLYFEPLTLEDVLNVIDLEQPVGVIVQFGGQTAINLAEGLAKNGVNILGTTVDDLDAAEDREVFDQVITDLNLKQPIGLTATTHSAVIKAAEKIGYPVLVRPSYVLGGKAMETVYNQEELQQYLQQNASITADHPILIDAYLEGRECEVDAICDGKDVLIPGIMEHIEHAGVHSGDSMAVYPPQHFNDDIKRQIVTATEKLAVALKCIGIMNIQFIVHNHEVYILEVNPRASRTVPFLSKITGIEMAQVATRVILGQSLADQGFTNGLYPEPQTIHVKAPVFSFNKLANVDSYLSPEMKSTGEVMGTDTTYEKALHKAFSGAHIQVPNDGKILFTIENGDEKEVLPLAKRFAQIGYQVFTTPQTASHFKDNGIHIHQEISNIDELNCLLKAGQIDLVINTMRHDYEQDSLGFQIRQSTIAQNVPLMTSLDTVNALLRVKEDQSLEAITIK</sequence>
<comment type="function">
    <text evidence="1">Large subunit of the glutamine-dependent carbamoyl phosphate synthetase (CPSase). CPSase catalyzes the formation of carbamoyl phosphate from the ammonia moiety of glutamine, carbonate, and phosphate donated by ATP, constituting the first step of 2 biosynthetic pathways, one leading to arginine and/or urea and the other to pyrimidine nucleotides. The large subunit (synthetase) binds the substrates ammonia (free or transferred from glutamine from the small subunit), hydrogencarbonate and ATP and carries out an ATP-coupled ligase reaction, activating hydrogencarbonate by forming carboxy phosphate which reacts with ammonia to form carbamoyl phosphate.</text>
</comment>
<comment type="catalytic activity">
    <reaction evidence="1">
        <text>hydrogencarbonate + L-glutamine + 2 ATP + H2O = carbamoyl phosphate + L-glutamate + 2 ADP + phosphate + 2 H(+)</text>
        <dbReference type="Rhea" id="RHEA:18633"/>
        <dbReference type="ChEBI" id="CHEBI:15377"/>
        <dbReference type="ChEBI" id="CHEBI:15378"/>
        <dbReference type="ChEBI" id="CHEBI:17544"/>
        <dbReference type="ChEBI" id="CHEBI:29985"/>
        <dbReference type="ChEBI" id="CHEBI:30616"/>
        <dbReference type="ChEBI" id="CHEBI:43474"/>
        <dbReference type="ChEBI" id="CHEBI:58228"/>
        <dbReference type="ChEBI" id="CHEBI:58359"/>
        <dbReference type="ChEBI" id="CHEBI:456216"/>
        <dbReference type="EC" id="6.3.5.5"/>
    </reaction>
</comment>
<comment type="catalytic activity">
    <molecule>Carbamoyl phosphate synthase large chain</molecule>
    <reaction evidence="1">
        <text>hydrogencarbonate + NH4(+) + 2 ATP = carbamoyl phosphate + 2 ADP + phosphate + 2 H(+)</text>
        <dbReference type="Rhea" id="RHEA:18029"/>
        <dbReference type="ChEBI" id="CHEBI:15378"/>
        <dbReference type="ChEBI" id="CHEBI:17544"/>
        <dbReference type="ChEBI" id="CHEBI:28938"/>
        <dbReference type="ChEBI" id="CHEBI:30616"/>
        <dbReference type="ChEBI" id="CHEBI:43474"/>
        <dbReference type="ChEBI" id="CHEBI:58228"/>
        <dbReference type="ChEBI" id="CHEBI:456216"/>
        <dbReference type="EC" id="6.3.4.16"/>
    </reaction>
</comment>
<comment type="cofactor">
    <cofactor evidence="1">
        <name>Mg(2+)</name>
        <dbReference type="ChEBI" id="CHEBI:18420"/>
    </cofactor>
    <cofactor evidence="1">
        <name>Mn(2+)</name>
        <dbReference type="ChEBI" id="CHEBI:29035"/>
    </cofactor>
    <text evidence="1">Binds 4 Mg(2+) or Mn(2+) ions per subunit.</text>
</comment>
<comment type="pathway">
    <text evidence="1">Amino-acid biosynthesis; L-arginine biosynthesis; carbamoyl phosphate from bicarbonate: step 1/1.</text>
</comment>
<comment type="pathway">
    <text evidence="1">Pyrimidine metabolism; UMP biosynthesis via de novo pathway; (S)-dihydroorotate from bicarbonate: step 1/3.</text>
</comment>
<comment type="subunit">
    <text evidence="1">Composed of two chains; the small (or glutamine) chain promotes the hydrolysis of glutamine to ammonia, which is used by the large (or ammonia) chain to synthesize carbamoyl phosphate. Tetramer of heterodimers (alpha,beta)4.</text>
</comment>
<comment type="domain">
    <text evidence="1">The large subunit is composed of 2 ATP-grasp domains that are involved in binding the 2 ATP molecules needed for carbamoyl phosphate synthesis. The N-terminal ATP-grasp domain (referred to as the carboxyphosphate synthetic component) catalyzes the ATP-dependent phosphorylation of hydrogencarbonate to carboxyphosphate and the subsequent nucleophilic attack by ammonia to form a carbamate intermediate. The C-terminal ATP-grasp domain (referred to as the carbamoyl phosphate synthetic component) then catalyzes the phosphorylation of carbamate with the second ATP to form the end product carbamoyl phosphate. The reactive and unstable enzyme intermediates are sequentially channeled from one active site to the next through the interior of the protein over a distance of at least 96 A.</text>
</comment>
<comment type="similarity">
    <text evidence="1">Belongs to the CarB family.</text>
</comment>
<protein>
    <recommendedName>
        <fullName evidence="1">Carbamoyl phosphate synthase large chain</fullName>
        <ecNumber evidence="1">6.3.4.16</ecNumber>
        <ecNumber evidence="1">6.3.5.5</ecNumber>
    </recommendedName>
    <alternativeName>
        <fullName evidence="1">Carbamoyl phosphate synthetase ammonia chain</fullName>
    </alternativeName>
</protein>
<gene>
    <name evidence="1" type="primary">carB</name>
    <name type="ordered locus">Lreu_0085</name>
</gene>
<name>CARB_LIMRD</name>
<reference key="1">
    <citation type="journal article" date="2011" name="PLoS Genet.">
        <title>The evolution of host specialization in the vertebrate gut symbiont Lactobacillus reuteri.</title>
        <authorList>
            <person name="Frese S.A."/>
            <person name="Benson A.K."/>
            <person name="Tannock G.W."/>
            <person name="Loach D.M."/>
            <person name="Kim J."/>
            <person name="Zhang M."/>
            <person name="Oh P.L."/>
            <person name="Heng N.C."/>
            <person name="Patil P.B."/>
            <person name="Juge N."/>
            <person name="Mackenzie D.A."/>
            <person name="Pearson B.M."/>
            <person name="Lapidus A."/>
            <person name="Dalin E."/>
            <person name="Tice H."/>
            <person name="Goltsman E."/>
            <person name="Land M."/>
            <person name="Hauser L."/>
            <person name="Ivanova N."/>
            <person name="Kyrpides N.C."/>
            <person name="Walter J."/>
        </authorList>
    </citation>
    <scope>NUCLEOTIDE SEQUENCE [LARGE SCALE GENOMIC DNA]</scope>
    <source>
        <strain>DSM 20016</strain>
    </source>
</reference>
<dbReference type="EC" id="6.3.4.16" evidence="1"/>
<dbReference type="EC" id="6.3.5.5" evidence="1"/>
<dbReference type="EMBL" id="CP000705">
    <property type="protein sequence ID" value="ABQ82360.1"/>
    <property type="molecule type" value="Genomic_DNA"/>
</dbReference>
<dbReference type="RefSeq" id="WP_003669623.1">
    <property type="nucleotide sequence ID" value="NC_009513.1"/>
</dbReference>
<dbReference type="SMR" id="A5VHN6"/>
<dbReference type="STRING" id="557436.Lreu_0085"/>
<dbReference type="KEGG" id="lre:Lreu_0085"/>
<dbReference type="PATRIC" id="fig|557436.17.peg.952"/>
<dbReference type="eggNOG" id="COG0458">
    <property type="taxonomic scope" value="Bacteria"/>
</dbReference>
<dbReference type="HOGENOM" id="CLU_000513_1_0_9"/>
<dbReference type="UniPathway" id="UPA00068">
    <property type="reaction ID" value="UER00171"/>
</dbReference>
<dbReference type="UniPathway" id="UPA00070">
    <property type="reaction ID" value="UER00115"/>
</dbReference>
<dbReference type="Proteomes" id="UP000001991">
    <property type="component" value="Chromosome"/>
</dbReference>
<dbReference type="GO" id="GO:0005737">
    <property type="term" value="C:cytoplasm"/>
    <property type="evidence" value="ECO:0007669"/>
    <property type="project" value="TreeGrafter"/>
</dbReference>
<dbReference type="GO" id="GO:0005524">
    <property type="term" value="F:ATP binding"/>
    <property type="evidence" value="ECO:0007669"/>
    <property type="project" value="UniProtKB-UniRule"/>
</dbReference>
<dbReference type="GO" id="GO:0004087">
    <property type="term" value="F:carbamoyl-phosphate synthase (ammonia) activity"/>
    <property type="evidence" value="ECO:0007669"/>
    <property type="project" value="RHEA"/>
</dbReference>
<dbReference type="GO" id="GO:0004088">
    <property type="term" value="F:carbamoyl-phosphate synthase (glutamine-hydrolyzing) activity"/>
    <property type="evidence" value="ECO:0007669"/>
    <property type="project" value="UniProtKB-UniRule"/>
</dbReference>
<dbReference type="GO" id="GO:0046872">
    <property type="term" value="F:metal ion binding"/>
    <property type="evidence" value="ECO:0007669"/>
    <property type="project" value="UniProtKB-KW"/>
</dbReference>
<dbReference type="GO" id="GO:0044205">
    <property type="term" value="P:'de novo' UMP biosynthetic process"/>
    <property type="evidence" value="ECO:0007669"/>
    <property type="project" value="UniProtKB-UniRule"/>
</dbReference>
<dbReference type="GO" id="GO:0006541">
    <property type="term" value="P:glutamine metabolic process"/>
    <property type="evidence" value="ECO:0007669"/>
    <property type="project" value="TreeGrafter"/>
</dbReference>
<dbReference type="GO" id="GO:0006526">
    <property type="term" value="P:L-arginine biosynthetic process"/>
    <property type="evidence" value="ECO:0007669"/>
    <property type="project" value="UniProtKB-UniRule"/>
</dbReference>
<dbReference type="FunFam" id="1.10.1030.10:FF:000002">
    <property type="entry name" value="Carbamoyl-phosphate synthase large chain"/>
    <property type="match status" value="1"/>
</dbReference>
<dbReference type="FunFam" id="3.30.1490.20:FF:000001">
    <property type="entry name" value="Carbamoyl-phosphate synthase large chain"/>
    <property type="match status" value="1"/>
</dbReference>
<dbReference type="FunFam" id="3.30.470.20:FF:000001">
    <property type="entry name" value="Carbamoyl-phosphate synthase large chain"/>
    <property type="match status" value="1"/>
</dbReference>
<dbReference type="FunFam" id="3.30.470.20:FF:000026">
    <property type="entry name" value="Carbamoyl-phosphate synthase large chain"/>
    <property type="match status" value="1"/>
</dbReference>
<dbReference type="FunFam" id="3.40.50.20:FF:000001">
    <property type="entry name" value="Carbamoyl-phosphate synthase large chain"/>
    <property type="match status" value="2"/>
</dbReference>
<dbReference type="Gene3D" id="3.40.50.20">
    <property type="match status" value="2"/>
</dbReference>
<dbReference type="Gene3D" id="3.30.1490.20">
    <property type="entry name" value="ATP-grasp fold, A domain"/>
    <property type="match status" value="1"/>
</dbReference>
<dbReference type="Gene3D" id="3.30.470.20">
    <property type="entry name" value="ATP-grasp fold, B domain"/>
    <property type="match status" value="2"/>
</dbReference>
<dbReference type="Gene3D" id="1.10.1030.10">
    <property type="entry name" value="Carbamoyl-phosphate synthetase, large subunit oligomerisation domain"/>
    <property type="match status" value="1"/>
</dbReference>
<dbReference type="Gene3D" id="3.40.50.1380">
    <property type="entry name" value="Methylglyoxal synthase-like domain"/>
    <property type="match status" value="1"/>
</dbReference>
<dbReference type="HAMAP" id="MF_01210_B">
    <property type="entry name" value="CPSase_L_chain_B"/>
    <property type="match status" value="1"/>
</dbReference>
<dbReference type="InterPro" id="IPR011761">
    <property type="entry name" value="ATP-grasp"/>
</dbReference>
<dbReference type="InterPro" id="IPR013815">
    <property type="entry name" value="ATP_grasp_subdomain_1"/>
</dbReference>
<dbReference type="InterPro" id="IPR006275">
    <property type="entry name" value="CarbamoylP_synth_lsu"/>
</dbReference>
<dbReference type="InterPro" id="IPR005480">
    <property type="entry name" value="CarbamoylP_synth_lsu_oligo"/>
</dbReference>
<dbReference type="InterPro" id="IPR036897">
    <property type="entry name" value="CarbamoylP_synth_lsu_oligo_sf"/>
</dbReference>
<dbReference type="InterPro" id="IPR005479">
    <property type="entry name" value="CbamoylP_synth_lsu-like_ATP-bd"/>
</dbReference>
<dbReference type="InterPro" id="IPR005483">
    <property type="entry name" value="CbamoylP_synth_lsu_CPSase_dom"/>
</dbReference>
<dbReference type="InterPro" id="IPR011607">
    <property type="entry name" value="MGS-like_dom"/>
</dbReference>
<dbReference type="InterPro" id="IPR036914">
    <property type="entry name" value="MGS-like_dom_sf"/>
</dbReference>
<dbReference type="InterPro" id="IPR016185">
    <property type="entry name" value="PreATP-grasp_dom_sf"/>
</dbReference>
<dbReference type="NCBIfam" id="TIGR01369">
    <property type="entry name" value="CPSaseII_lrg"/>
    <property type="match status" value="1"/>
</dbReference>
<dbReference type="NCBIfam" id="NF003671">
    <property type="entry name" value="PRK05294.1"/>
    <property type="match status" value="1"/>
</dbReference>
<dbReference type="NCBIfam" id="NF009455">
    <property type="entry name" value="PRK12815.1"/>
    <property type="match status" value="1"/>
</dbReference>
<dbReference type="PANTHER" id="PTHR11405:SF53">
    <property type="entry name" value="CARBAMOYL-PHOSPHATE SYNTHASE [AMMONIA], MITOCHONDRIAL"/>
    <property type="match status" value="1"/>
</dbReference>
<dbReference type="PANTHER" id="PTHR11405">
    <property type="entry name" value="CARBAMOYLTRANSFERASE FAMILY MEMBER"/>
    <property type="match status" value="1"/>
</dbReference>
<dbReference type="Pfam" id="PF02786">
    <property type="entry name" value="CPSase_L_D2"/>
    <property type="match status" value="2"/>
</dbReference>
<dbReference type="Pfam" id="PF02787">
    <property type="entry name" value="CPSase_L_D3"/>
    <property type="match status" value="1"/>
</dbReference>
<dbReference type="Pfam" id="PF02142">
    <property type="entry name" value="MGS"/>
    <property type="match status" value="1"/>
</dbReference>
<dbReference type="PRINTS" id="PR00098">
    <property type="entry name" value="CPSASE"/>
</dbReference>
<dbReference type="SMART" id="SM01096">
    <property type="entry name" value="CPSase_L_D3"/>
    <property type="match status" value="1"/>
</dbReference>
<dbReference type="SMART" id="SM00851">
    <property type="entry name" value="MGS"/>
    <property type="match status" value="1"/>
</dbReference>
<dbReference type="SUPFAM" id="SSF48108">
    <property type="entry name" value="Carbamoyl phosphate synthetase, large subunit connection domain"/>
    <property type="match status" value="1"/>
</dbReference>
<dbReference type="SUPFAM" id="SSF56059">
    <property type="entry name" value="Glutathione synthetase ATP-binding domain-like"/>
    <property type="match status" value="2"/>
</dbReference>
<dbReference type="SUPFAM" id="SSF52335">
    <property type="entry name" value="Methylglyoxal synthase-like"/>
    <property type="match status" value="1"/>
</dbReference>
<dbReference type="SUPFAM" id="SSF52440">
    <property type="entry name" value="PreATP-grasp domain"/>
    <property type="match status" value="2"/>
</dbReference>
<dbReference type="PROSITE" id="PS50975">
    <property type="entry name" value="ATP_GRASP"/>
    <property type="match status" value="2"/>
</dbReference>
<dbReference type="PROSITE" id="PS00866">
    <property type="entry name" value="CPSASE_1"/>
    <property type="match status" value="2"/>
</dbReference>
<dbReference type="PROSITE" id="PS00867">
    <property type="entry name" value="CPSASE_2"/>
    <property type="match status" value="2"/>
</dbReference>
<dbReference type="PROSITE" id="PS51855">
    <property type="entry name" value="MGS"/>
    <property type="match status" value="1"/>
</dbReference>
<evidence type="ECO:0000255" key="1">
    <source>
        <dbReference type="HAMAP-Rule" id="MF_01210"/>
    </source>
</evidence>